<keyword id="KW-0325">Glycoprotein</keyword>
<keyword id="KW-0472">Membrane</keyword>
<keyword id="KW-1185">Reference proteome</keyword>
<keyword id="KW-0812">Transmembrane</keyword>
<keyword id="KW-1133">Transmembrane helix</keyword>
<gene>
    <name type="primary">SLC44A3</name>
    <name type="synonym">CTL3</name>
</gene>
<protein>
    <recommendedName>
        <fullName>Choline transporter-like protein 3</fullName>
    </recommendedName>
    <alternativeName>
        <fullName>Solute carrier family 44 member 3</fullName>
    </alternativeName>
</protein>
<name>CTL3_BOVIN</name>
<organism>
    <name type="scientific">Bos taurus</name>
    <name type="common">Bovine</name>
    <dbReference type="NCBI Taxonomy" id="9913"/>
    <lineage>
        <taxon>Eukaryota</taxon>
        <taxon>Metazoa</taxon>
        <taxon>Chordata</taxon>
        <taxon>Craniata</taxon>
        <taxon>Vertebrata</taxon>
        <taxon>Euteleostomi</taxon>
        <taxon>Mammalia</taxon>
        <taxon>Eutheria</taxon>
        <taxon>Laurasiatheria</taxon>
        <taxon>Artiodactyla</taxon>
        <taxon>Ruminantia</taxon>
        <taxon>Pecora</taxon>
        <taxon>Bovidae</taxon>
        <taxon>Bovinae</taxon>
        <taxon>Bos</taxon>
    </lineage>
</organism>
<evidence type="ECO:0000250" key="1"/>
<evidence type="ECO:0000255" key="2"/>
<evidence type="ECO:0000305" key="3"/>
<accession>A5PK40</accession>
<feature type="chain" id="PRO_0000359719" description="Choline transporter-like protein 3">
    <location>
        <begin position="1"/>
        <end position="649"/>
    </location>
</feature>
<feature type="transmembrane region" description="Helical" evidence="2">
    <location>
        <begin position="33"/>
        <end position="53"/>
    </location>
</feature>
<feature type="transmembrane region" description="Helical" evidence="2">
    <location>
        <begin position="213"/>
        <end position="233"/>
    </location>
</feature>
<feature type="transmembrane region" description="Helical" evidence="2">
    <location>
        <begin position="235"/>
        <end position="255"/>
    </location>
</feature>
<feature type="transmembrane region" description="Helical" evidence="2">
    <location>
        <begin position="284"/>
        <end position="304"/>
    </location>
</feature>
<feature type="transmembrane region" description="Helical" evidence="2">
    <location>
        <begin position="334"/>
        <end position="354"/>
    </location>
</feature>
<feature type="transmembrane region" description="Helical" evidence="2">
    <location>
        <begin position="384"/>
        <end position="404"/>
    </location>
</feature>
<feature type="transmembrane region" description="Helical" evidence="2">
    <location>
        <begin position="533"/>
        <end position="553"/>
    </location>
</feature>
<feature type="transmembrane region" description="Helical" evidence="2">
    <location>
        <begin position="562"/>
        <end position="582"/>
    </location>
</feature>
<feature type="glycosylation site" description="N-linked (GlcNAc...) asparagine" evidence="2">
    <location>
        <position position="136"/>
    </location>
</feature>
<feature type="glycosylation site" description="N-linked (GlcNAc...) asparagine" evidence="2">
    <location>
        <position position="151"/>
    </location>
</feature>
<feature type="glycosylation site" description="N-linked (GlcNAc...) asparagine" evidence="2">
    <location>
        <position position="414"/>
    </location>
</feature>
<feature type="glycosylation site" description="N-linked (GlcNAc...) asparagine" evidence="2">
    <location>
        <position position="502"/>
    </location>
</feature>
<feature type="glycosylation site" description="N-linked (GlcNAc...) asparagine" evidence="2">
    <location>
        <position position="520"/>
    </location>
</feature>
<sequence>MQCLGAEHLDSAERIPTQRQWRPQIYRKCTDTAWLFLFFLFWTGLVFIMGYSVAAGATGRLLFGYDSFGNVCGKKNSPVEGAPLSGQDMTQKKHVFFMNSCNLEVKDVRLSSTVLCVSSCPEEQLDTLEEVQLFANTSGSFLCVYNLNSFNYTQIPNADLLCPRLPVPPSKSFPLFNRCIPQTPECYSLFASVLINDVDSLHRILSGIMSGRDTVLGLCILAFALSLAMMFTFRFITTLLVHIFIALIVLGLLFVCSVLWWLYYDYTNDLSIELDTERENMKCLLGFAIVSTVITAVLLILIYVLRKRIKLTVELLQVTNKAISSSPFLLFQPLWTFAILIFFWVLWVAVLLSLGTAGAAQVVEGGQVEYKPLSGIRYMWWYHLIGLIWTSEFILACQQMAVAGTVVTCYFNRNKSDPPDRPILSSLSILFCYHQGTVVKGSFLITVVRIPRAVLMYVYNTLKEKDGALSRCVSQCCCCCFWCLDKCLRHLNQNAYTTTAINGTDFCTSAKDALKLLSKNSSHFTSVNCFGDFIIFLGKVLVVCFTVFGGLMAFNYHRVLQVWAVPLLLVAFFAYLVAHSFLSVFETVLDALFLCFAVDLETNDGSSEKPYFMDQEFLNFVKRINKLNTRAQRNKNSLTSEEGTELRPL</sequence>
<comment type="subcellular location">
    <subcellularLocation>
        <location evidence="1">Membrane</location>
        <topology evidence="1">Multi-pass membrane protein</topology>
    </subcellularLocation>
</comment>
<comment type="similarity">
    <text evidence="3">Belongs to the CTL (choline transporter-like) family.</text>
</comment>
<reference key="1">
    <citation type="submission" date="2007-06" db="EMBL/GenBank/DDBJ databases">
        <authorList>
            <consortium name="NIH - Mammalian Gene Collection (MGC) project"/>
        </authorList>
    </citation>
    <scope>NUCLEOTIDE SEQUENCE [LARGE SCALE MRNA]</scope>
    <source>
        <strain>Hereford</strain>
        <tissue>Fetal pons</tissue>
    </source>
</reference>
<proteinExistence type="evidence at transcript level"/>
<dbReference type="EMBL" id="BC142344">
    <property type="protein sequence ID" value="AAI42345.1"/>
    <property type="molecule type" value="mRNA"/>
</dbReference>
<dbReference type="RefSeq" id="NP_001092370.1">
    <property type="nucleotide sequence ID" value="NM_001098900.2"/>
</dbReference>
<dbReference type="FunCoup" id="A5PK40">
    <property type="interactions" value="153"/>
</dbReference>
<dbReference type="STRING" id="9913.ENSBTAP00000063549"/>
<dbReference type="GlyCosmos" id="A5PK40">
    <property type="glycosylation" value="5 sites, No reported glycans"/>
</dbReference>
<dbReference type="GlyGen" id="A5PK40">
    <property type="glycosylation" value="5 sites"/>
</dbReference>
<dbReference type="PaxDb" id="9913-ENSBTAP00000033454"/>
<dbReference type="GeneID" id="507455"/>
<dbReference type="KEGG" id="bta:507455"/>
<dbReference type="CTD" id="126969"/>
<dbReference type="VEuPathDB" id="HostDB:ENSBTAG00000020344"/>
<dbReference type="eggNOG" id="KOG1362">
    <property type="taxonomic scope" value="Eukaryota"/>
</dbReference>
<dbReference type="HOGENOM" id="CLU_017181_2_0_1"/>
<dbReference type="InParanoid" id="A5PK40"/>
<dbReference type="OMA" id="LLGIRYM"/>
<dbReference type="OrthoDB" id="420519at2759"/>
<dbReference type="TreeFam" id="TF313325"/>
<dbReference type="Reactome" id="R-BTA-1483191">
    <property type="pathway name" value="Synthesis of PC"/>
</dbReference>
<dbReference type="Reactome" id="R-BTA-425366">
    <property type="pathway name" value="Transport of bile salts and organic acids, metal ions and amine compounds"/>
</dbReference>
<dbReference type="Proteomes" id="UP000009136">
    <property type="component" value="Chromosome 3"/>
</dbReference>
<dbReference type="Bgee" id="ENSBTAG00000020344">
    <property type="expression patterns" value="Expressed in prostate gland and 96 other cell types or tissues"/>
</dbReference>
<dbReference type="GO" id="GO:0016020">
    <property type="term" value="C:membrane"/>
    <property type="evidence" value="ECO:0000318"/>
    <property type="project" value="GO_Central"/>
</dbReference>
<dbReference type="GO" id="GO:0015101">
    <property type="term" value="F:organic cation transmembrane transporter activity"/>
    <property type="evidence" value="ECO:0007669"/>
    <property type="project" value="UniProtKB-ARBA"/>
</dbReference>
<dbReference type="GO" id="GO:0022857">
    <property type="term" value="F:transmembrane transporter activity"/>
    <property type="evidence" value="ECO:0000318"/>
    <property type="project" value="GO_Central"/>
</dbReference>
<dbReference type="GO" id="GO:0055085">
    <property type="term" value="P:transmembrane transport"/>
    <property type="evidence" value="ECO:0000318"/>
    <property type="project" value="GO_Central"/>
</dbReference>
<dbReference type="InterPro" id="IPR007603">
    <property type="entry name" value="Choline_transptr-like"/>
</dbReference>
<dbReference type="PANTHER" id="PTHR12385">
    <property type="entry name" value="CHOLINE TRANSPORTER-LIKE (SLC FAMILY 44)"/>
    <property type="match status" value="1"/>
</dbReference>
<dbReference type="PANTHER" id="PTHR12385:SF13">
    <property type="entry name" value="CHOLINE TRANSPORTER-LIKE PROTEIN 3"/>
    <property type="match status" value="1"/>
</dbReference>
<dbReference type="Pfam" id="PF04515">
    <property type="entry name" value="Choline_transpo"/>
    <property type="match status" value="1"/>
</dbReference>